<evidence type="ECO:0000250" key="1">
    <source>
        <dbReference type="UniProtKB" id="B8A4F0"/>
    </source>
</evidence>
<evidence type="ECO:0000250" key="2">
    <source>
        <dbReference type="UniProtKB" id="Q8IUH5"/>
    </source>
</evidence>
<evidence type="ECO:0000250" key="3">
    <source>
        <dbReference type="UniProtKB" id="Q9ESG8"/>
    </source>
</evidence>
<evidence type="ECO:0000255" key="4"/>
<evidence type="ECO:0000255" key="5">
    <source>
        <dbReference type="PROSITE-ProRule" id="PRU00067"/>
    </source>
</evidence>
<evidence type="ECO:0000269" key="6">
    <source>
    </source>
</evidence>
<evidence type="ECO:0000269" key="7">
    <source>
    </source>
</evidence>
<evidence type="ECO:0000303" key="8">
    <source>
    </source>
</evidence>
<evidence type="ECO:0000303" key="9">
    <source>
    </source>
</evidence>
<evidence type="ECO:0000303" key="10">
    <source>
    </source>
</evidence>
<evidence type="ECO:0000305" key="11"/>
<evidence type="ECO:0000305" key="12">
    <source>
    </source>
</evidence>
<evidence type="ECO:0000312" key="13">
    <source>
        <dbReference type="HGNC" id="HGNC:20714"/>
    </source>
</evidence>
<comment type="function">
    <text evidence="1 3 7">Palmitoyl acyltransferase that mediates palmitoylation of proteins such as PLN and ZDHHC6 (PubMed:28826475). Required during embryonic heart development and cardiac function, possibly by mediating palmitoylation of PLN, thereby affecting PLN phosphorylation and homooligomerization (By similarity). Also required for eye development (By similarity). Palmitoylates ZDHHC6, affecting the quaternary assembly of ZDHHC6, its localization, stability and function (PubMed:28826475). May play a role in DNA damage response (By similarity). May be involved in apoptosis regulation (By similarity). Involved in the proliferation of neural stem cells by regulating the FGF/ERK pathway (By similarity).</text>
</comment>
<comment type="catalytic activity">
    <reaction evidence="7">
        <text>L-cysteinyl-[protein] + hexadecanoyl-CoA = S-hexadecanoyl-L-cysteinyl-[protein] + CoA</text>
        <dbReference type="Rhea" id="RHEA:36683"/>
        <dbReference type="Rhea" id="RHEA-COMP:10131"/>
        <dbReference type="Rhea" id="RHEA-COMP:11032"/>
        <dbReference type="ChEBI" id="CHEBI:29950"/>
        <dbReference type="ChEBI" id="CHEBI:57287"/>
        <dbReference type="ChEBI" id="CHEBI:57379"/>
        <dbReference type="ChEBI" id="CHEBI:74151"/>
        <dbReference type="EC" id="2.3.1.225"/>
    </reaction>
</comment>
<comment type="subunit">
    <text evidence="3 6">Interacts with ABL1 (By similarity). Interacts with COPS5/JAB1 (PubMed:17123647).</text>
</comment>
<comment type="interaction">
    <interactant intactId="EBI-11572692">
        <id>Q969W1</id>
    </interactant>
    <interactant intactId="EBI-11603430">
        <id>Q6PL24</id>
        <label>TMED8</label>
    </interactant>
    <organismsDiffer>false</organismsDiffer>
    <experiments>3</experiments>
</comment>
<comment type="interaction">
    <interactant intactId="EBI-11572692">
        <id>Q969W1</id>
    </interactant>
    <interactant intactId="EBI-2799703">
        <id>O95070</id>
        <label>YIF1A</label>
    </interactant>
    <organismsDiffer>false</organismsDiffer>
    <experiments>3</experiments>
</comment>
<comment type="subcellular location">
    <subcellularLocation>
        <location evidence="12">Endoplasmic reticulum membrane</location>
        <topology evidence="3">Multi-pass membrane protein</topology>
    </subcellularLocation>
</comment>
<comment type="alternative products">
    <event type="alternative splicing"/>
    <isoform>
        <id>Q969W1-1</id>
        <name>1</name>
        <sequence type="displayed"/>
    </isoform>
    <isoform>
        <id>Q969W1-2</id>
        <name>2</name>
        <sequence type="described" ref="VSP_008716"/>
    </isoform>
    <isoform>
        <id>Q969W1-3</id>
        <name>3</name>
        <sequence type="described" ref="VSP_016275"/>
    </isoform>
    <isoform>
        <id>Q969W1-4</id>
        <name>4</name>
        <sequence type="described" ref="VSP_016274 VSP_008716"/>
    </isoform>
</comment>
<comment type="tissue specificity">
    <text evidence="6">Widely expressed.</text>
</comment>
<comment type="domain">
    <text evidence="2">The DHHC domain is required for palmitoyltransferase activity.</text>
</comment>
<comment type="similarity">
    <text evidence="11">Belongs to the DHHC palmitoyltransferase family.</text>
</comment>
<accession>Q969W1</accession>
<accession>D3DR52</accession>
<accession>D3DR53</accession>
<accession>D3DR54</accession>
<accession>Q5JTG7</accession>
<accession>Q5JTH0</accession>
<accession>Q8N4Z6</accession>
<accession>Q8WY84</accession>
<accession>Q9BSV3</accession>
<protein>
    <recommendedName>
        <fullName evidence="11">Palmitoyltransferase ZDHHC16</fullName>
        <ecNumber evidence="7">2.3.1.225</ecNumber>
    </recommendedName>
    <alternativeName>
        <fullName evidence="10">Abl-philin 2</fullName>
    </alternativeName>
    <alternativeName>
        <fullName>Zinc finger DHHC domain-containing protein 16</fullName>
        <shortName>DHHC-16</shortName>
    </alternativeName>
</protein>
<keyword id="KW-0012">Acyltransferase</keyword>
<keyword id="KW-0025">Alternative splicing</keyword>
<keyword id="KW-0053">Apoptosis</keyword>
<keyword id="KW-0227">DNA damage</keyword>
<keyword id="KW-0256">Endoplasmic reticulum</keyword>
<keyword id="KW-0472">Membrane</keyword>
<keyword id="KW-1267">Proteomics identification</keyword>
<keyword id="KW-1185">Reference proteome</keyword>
<keyword id="KW-0808">Transferase</keyword>
<keyword id="KW-0812">Transmembrane</keyword>
<keyword id="KW-1133">Transmembrane helix</keyword>
<reference key="1">
    <citation type="journal article" date="2006" name="Biochim. Biophys. Acta">
        <title>Molecular cloning and characterization of human Aph2 gene, involved in AP-1 regulation by interaction with JAB1.</title>
        <authorList>
            <person name="Zhang F."/>
            <person name="Di Y."/>
            <person name="Li J."/>
            <person name="Shi Y."/>
            <person name="Zhang L."/>
            <person name="Wang C."/>
            <person name="He X."/>
            <person name="Liu Y."/>
            <person name="Wan D."/>
            <person name="Huo K."/>
            <person name="Gu J."/>
        </authorList>
    </citation>
    <scope>NUCLEOTIDE SEQUENCE [MRNA] (ISOFORM 2)</scope>
    <scope>SUBCELLULAR LOCATION</scope>
    <scope>ALTERNATIVE SPLICING</scope>
    <scope>TISSUE SPECIFICITY</scope>
    <scope>INTERACTION WITH COPS5</scope>
    <source>
        <tissue>Placenta</tissue>
    </source>
</reference>
<reference key="2">
    <citation type="submission" date="2000-10" db="EMBL/GenBank/DDBJ databases">
        <title>A novel gene containing the cysteine-rich zf-DHHC motif is localised at human chromosomal region 10q23.3-q24.</title>
        <authorList>
            <person name="Sarafidou T."/>
            <person name="Moschonas N.K."/>
        </authorList>
    </citation>
    <scope>NUCLEOTIDE SEQUENCE [MRNA] (ISOFORM 1)</scope>
</reference>
<reference key="3">
    <citation type="journal article" date="2003" name="Genome Res.">
        <title>The secreted protein discovery initiative (SPDI), a large-scale effort to identify novel human secreted and transmembrane proteins: a bioinformatics assessment.</title>
        <authorList>
            <person name="Clark H.F."/>
            <person name="Gurney A.L."/>
            <person name="Abaya E."/>
            <person name="Baker K."/>
            <person name="Baldwin D.T."/>
            <person name="Brush J."/>
            <person name="Chen J."/>
            <person name="Chow B."/>
            <person name="Chui C."/>
            <person name="Crowley C."/>
            <person name="Currell B."/>
            <person name="Deuel B."/>
            <person name="Dowd P."/>
            <person name="Eaton D."/>
            <person name="Foster J.S."/>
            <person name="Grimaldi C."/>
            <person name="Gu Q."/>
            <person name="Hass P.E."/>
            <person name="Heldens S."/>
            <person name="Huang A."/>
            <person name="Kim H.S."/>
            <person name="Klimowski L."/>
            <person name="Jin Y."/>
            <person name="Johnson S."/>
            <person name="Lee J."/>
            <person name="Lewis L."/>
            <person name="Liao D."/>
            <person name="Mark M.R."/>
            <person name="Robbie E."/>
            <person name="Sanchez C."/>
            <person name="Schoenfeld J."/>
            <person name="Seshagiri S."/>
            <person name="Simmons L."/>
            <person name="Singh J."/>
            <person name="Smith V."/>
            <person name="Stinson J."/>
            <person name="Vagts A."/>
            <person name="Vandlen R.L."/>
            <person name="Watanabe C."/>
            <person name="Wieand D."/>
            <person name="Woods K."/>
            <person name="Xie M.-H."/>
            <person name="Yansura D.G."/>
            <person name="Yi S."/>
            <person name="Yu G."/>
            <person name="Yuan J."/>
            <person name="Zhang M."/>
            <person name="Zhang Z."/>
            <person name="Goddard A.D."/>
            <person name="Wood W.I."/>
            <person name="Godowski P.J."/>
            <person name="Gray A.M."/>
        </authorList>
    </citation>
    <scope>NUCLEOTIDE SEQUENCE [LARGE SCALE MRNA] (ISOFORM 2)</scope>
</reference>
<reference key="4">
    <citation type="journal article" date="2004" name="Nature">
        <title>The DNA sequence and comparative analysis of human chromosome 10.</title>
        <authorList>
            <person name="Deloukas P."/>
            <person name="Earthrowl M.E."/>
            <person name="Grafham D.V."/>
            <person name="Rubenfield M."/>
            <person name="French L."/>
            <person name="Steward C.A."/>
            <person name="Sims S.K."/>
            <person name="Jones M.C."/>
            <person name="Searle S."/>
            <person name="Scott C."/>
            <person name="Howe K."/>
            <person name="Hunt S.E."/>
            <person name="Andrews T.D."/>
            <person name="Gilbert J.G.R."/>
            <person name="Swarbreck D."/>
            <person name="Ashurst J.L."/>
            <person name="Taylor A."/>
            <person name="Battles J."/>
            <person name="Bird C.P."/>
            <person name="Ainscough R."/>
            <person name="Almeida J.P."/>
            <person name="Ashwell R.I.S."/>
            <person name="Ambrose K.D."/>
            <person name="Babbage A.K."/>
            <person name="Bagguley C.L."/>
            <person name="Bailey J."/>
            <person name="Banerjee R."/>
            <person name="Bates K."/>
            <person name="Beasley H."/>
            <person name="Bray-Allen S."/>
            <person name="Brown A.J."/>
            <person name="Brown J.Y."/>
            <person name="Burford D.C."/>
            <person name="Burrill W."/>
            <person name="Burton J."/>
            <person name="Cahill P."/>
            <person name="Camire D."/>
            <person name="Carter N.P."/>
            <person name="Chapman J.C."/>
            <person name="Clark S.Y."/>
            <person name="Clarke G."/>
            <person name="Clee C.M."/>
            <person name="Clegg S."/>
            <person name="Corby N."/>
            <person name="Coulson A."/>
            <person name="Dhami P."/>
            <person name="Dutta I."/>
            <person name="Dunn M."/>
            <person name="Faulkner L."/>
            <person name="Frankish A."/>
            <person name="Frankland J.A."/>
            <person name="Garner P."/>
            <person name="Garnett J."/>
            <person name="Gribble S."/>
            <person name="Griffiths C."/>
            <person name="Grocock R."/>
            <person name="Gustafson E."/>
            <person name="Hammond S."/>
            <person name="Harley J.L."/>
            <person name="Hart E."/>
            <person name="Heath P.D."/>
            <person name="Ho T.P."/>
            <person name="Hopkins B."/>
            <person name="Horne J."/>
            <person name="Howden P.J."/>
            <person name="Huckle E."/>
            <person name="Hynds C."/>
            <person name="Johnson C."/>
            <person name="Johnson D."/>
            <person name="Kana A."/>
            <person name="Kay M."/>
            <person name="Kimberley A.M."/>
            <person name="Kershaw J.K."/>
            <person name="Kokkinaki M."/>
            <person name="Laird G.K."/>
            <person name="Lawlor S."/>
            <person name="Lee H.M."/>
            <person name="Leongamornlert D.A."/>
            <person name="Laird G."/>
            <person name="Lloyd C."/>
            <person name="Lloyd D.M."/>
            <person name="Loveland J."/>
            <person name="Lovell J."/>
            <person name="McLaren S."/>
            <person name="McLay K.E."/>
            <person name="McMurray A."/>
            <person name="Mashreghi-Mohammadi M."/>
            <person name="Matthews L."/>
            <person name="Milne S."/>
            <person name="Nickerson T."/>
            <person name="Nguyen M."/>
            <person name="Overton-Larty E."/>
            <person name="Palmer S.A."/>
            <person name="Pearce A.V."/>
            <person name="Peck A.I."/>
            <person name="Pelan S."/>
            <person name="Phillimore B."/>
            <person name="Porter K."/>
            <person name="Rice C.M."/>
            <person name="Rogosin A."/>
            <person name="Ross M.T."/>
            <person name="Sarafidou T."/>
            <person name="Sehra H.K."/>
            <person name="Shownkeen R."/>
            <person name="Skuce C.D."/>
            <person name="Smith M."/>
            <person name="Standring L."/>
            <person name="Sycamore N."/>
            <person name="Tester J."/>
            <person name="Thorpe A."/>
            <person name="Torcasso W."/>
            <person name="Tracey A."/>
            <person name="Tromans A."/>
            <person name="Tsolas J."/>
            <person name="Wall M."/>
            <person name="Walsh J."/>
            <person name="Wang H."/>
            <person name="Weinstock K."/>
            <person name="West A.P."/>
            <person name="Willey D.L."/>
            <person name="Whitehead S.L."/>
            <person name="Wilming L."/>
            <person name="Wray P.W."/>
            <person name="Young L."/>
            <person name="Chen Y."/>
            <person name="Lovering R.C."/>
            <person name="Moschonas N.K."/>
            <person name="Siebert R."/>
            <person name="Fechtel K."/>
            <person name="Bentley D."/>
            <person name="Durbin R.M."/>
            <person name="Hubbard T."/>
            <person name="Doucette-Stamm L."/>
            <person name="Beck S."/>
            <person name="Smith D.R."/>
            <person name="Rogers J."/>
        </authorList>
    </citation>
    <scope>NUCLEOTIDE SEQUENCE [LARGE SCALE GENOMIC DNA]</scope>
</reference>
<reference key="5">
    <citation type="submission" date="2005-09" db="EMBL/GenBank/DDBJ databases">
        <authorList>
            <person name="Mural R.J."/>
            <person name="Istrail S."/>
            <person name="Sutton G.G."/>
            <person name="Florea L."/>
            <person name="Halpern A.L."/>
            <person name="Mobarry C.M."/>
            <person name="Lippert R."/>
            <person name="Walenz B."/>
            <person name="Shatkay H."/>
            <person name="Dew I."/>
            <person name="Miller J.R."/>
            <person name="Flanigan M.J."/>
            <person name="Edwards N.J."/>
            <person name="Bolanos R."/>
            <person name="Fasulo D."/>
            <person name="Halldorsson B.V."/>
            <person name="Hannenhalli S."/>
            <person name="Turner R."/>
            <person name="Yooseph S."/>
            <person name="Lu F."/>
            <person name="Nusskern D.R."/>
            <person name="Shue B.C."/>
            <person name="Zheng X.H."/>
            <person name="Zhong F."/>
            <person name="Delcher A.L."/>
            <person name="Huson D.H."/>
            <person name="Kravitz S.A."/>
            <person name="Mouchard L."/>
            <person name="Reinert K."/>
            <person name="Remington K.A."/>
            <person name="Clark A.G."/>
            <person name="Waterman M.S."/>
            <person name="Eichler E.E."/>
            <person name="Adams M.D."/>
            <person name="Hunkapiller M.W."/>
            <person name="Myers E.W."/>
            <person name="Venter J.C."/>
        </authorList>
    </citation>
    <scope>NUCLEOTIDE SEQUENCE [LARGE SCALE GENOMIC DNA]</scope>
</reference>
<reference key="6">
    <citation type="journal article" date="2004" name="Genome Res.">
        <title>The status, quality, and expansion of the NIH full-length cDNA project: the Mammalian Gene Collection (MGC).</title>
        <authorList>
            <consortium name="The MGC Project Team"/>
        </authorList>
    </citation>
    <scope>NUCLEOTIDE SEQUENCE [LARGE SCALE MRNA] (ISOFORMS 1; 3 AND 4)</scope>
    <source>
        <tissue>B-cell</tissue>
        <tissue>Brain</tissue>
        <tissue>Ovary</tissue>
        <tissue>Placenta</tissue>
    </source>
</reference>
<reference key="7">
    <citation type="journal article" date="2017" name="Elife">
        <title>Identification and dynamics of the human ZDHHC16-ZDHHC6 palmitoylation cascade.</title>
        <authorList>
            <person name="Abrami L."/>
            <person name="Dallavilla T."/>
            <person name="Sandoz P.A."/>
            <person name="Demir M."/>
            <person name="Kunz B."/>
            <person name="Savoglidis G."/>
            <person name="Hatzimanikatis V."/>
            <person name="van der Goot F.G."/>
        </authorList>
    </citation>
    <scope>FUNCTION</scope>
    <scope>CATALYTIC ACTIVITY</scope>
</reference>
<proteinExistence type="evidence at protein level"/>
<feature type="chain" id="PRO_0000212897" description="Palmitoyltransferase ZDHHC16">
    <location>
        <begin position="1"/>
        <end position="377"/>
    </location>
</feature>
<feature type="topological domain" description="Cytoplasmic" evidence="4">
    <location>
        <begin position="1"/>
        <end position="77"/>
    </location>
</feature>
<feature type="transmembrane region" description="Helical" evidence="4">
    <location>
        <begin position="78"/>
        <end position="98"/>
    </location>
</feature>
<feature type="topological domain" description="Lumenal" evidence="4">
    <location>
        <begin position="99"/>
        <end position="116"/>
    </location>
</feature>
<feature type="transmembrane region" description="Helical" evidence="4">
    <location>
        <begin position="117"/>
        <end position="137"/>
    </location>
</feature>
<feature type="topological domain" description="Cytoplasmic" evidence="4">
    <location>
        <begin position="138"/>
        <end position="198"/>
    </location>
</feature>
<feature type="transmembrane region" description="Helical" evidence="4">
    <location>
        <begin position="199"/>
        <end position="219"/>
    </location>
</feature>
<feature type="topological domain" description="Lumenal" evidence="4">
    <location>
        <begin position="220"/>
        <end position="266"/>
    </location>
</feature>
<feature type="transmembrane region" description="Helical" evidence="4">
    <location>
        <begin position="267"/>
        <end position="287"/>
    </location>
</feature>
<feature type="topological domain" description="Cytoplasmic" evidence="4">
    <location>
        <begin position="288"/>
        <end position="377"/>
    </location>
</feature>
<feature type="domain" description="DHHC" evidence="5">
    <location>
        <begin position="155"/>
        <end position="205"/>
    </location>
</feature>
<feature type="active site" description="S-palmitoyl cysteine intermediate" evidence="2">
    <location>
        <position position="185"/>
    </location>
</feature>
<feature type="splice variant" id="VSP_016274" description="In isoform 4." evidence="9">
    <location>
        <begin position="82"/>
        <end position="146"/>
    </location>
</feature>
<feature type="splice variant" id="VSP_016275" description="In isoform 3." evidence="9">
    <location>
        <begin position="176"/>
        <end position="214"/>
    </location>
</feature>
<feature type="splice variant" id="VSP_008716" description="In isoform 2 and isoform 4." evidence="8 9">
    <location>
        <begin position="231"/>
        <end position="246"/>
    </location>
</feature>
<organism>
    <name type="scientific">Homo sapiens</name>
    <name type="common">Human</name>
    <dbReference type="NCBI Taxonomy" id="9606"/>
    <lineage>
        <taxon>Eukaryota</taxon>
        <taxon>Metazoa</taxon>
        <taxon>Chordata</taxon>
        <taxon>Craniata</taxon>
        <taxon>Vertebrata</taxon>
        <taxon>Euteleostomi</taxon>
        <taxon>Mammalia</taxon>
        <taxon>Eutheria</taxon>
        <taxon>Euarchontoglires</taxon>
        <taxon>Primates</taxon>
        <taxon>Haplorrhini</taxon>
        <taxon>Catarrhini</taxon>
        <taxon>Hominidae</taxon>
        <taxon>Homo</taxon>
    </lineage>
</organism>
<name>ZDH16_HUMAN</name>
<gene>
    <name evidence="13" type="primary">ZDHHC16</name>
    <name evidence="10" type="synonym">APH2</name>
    <name type="ORF">UNQ2570/PRO6258</name>
</gene>
<dbReference type="EC" id="2.3.1.225" evidence="7"/>
<dbReference type="EMBL" id="AF258563">
    <property type="protein sequence ID" value="AAG23766.1"/>
    <property type="molecule type" value="mRNA"/>
</dbReference>
<dbReference type="EMBL" id="AJ294945">
    <property type="protein sequence ID" value="CAC82556.1"/>
    <property type="molecule type" value="mRNA"/>
</dbReference>
<dbReference type="EMBL" id="AY359080">
    <property type="protein sequence ID" value="AAQ89439.1"/>
    <property type="molecule type" value="mRNA"/>
</dbReference>
<dbReference type="EMBL" id="AL355490">
    <property type="status" value="NOT_ANNOTATED_CDS"/>
    <property type="molecule type" value="Genomic_DNA"/>
</dbReference>
<dbReference type="EMBL" id="CH471066">
    <property type="protein sequence ID" value="EAW49929.1"/>
    <property type="molecule type" value="Genomic_DNA"/>
</dbReference>
<dbReference type="EMBL" id="CH471066">
    <property type="protein sequence ID" value="EAW49930.1"/>
    <property type="molecule type" value="Genomic_DNA"/>
</dbReference>
<dbReference type="EMBL" id="CH471066">
    <property type="protein sequence ID" value="EAW49931.1"/>
    <property type="molecule type" value="Genomic_DNA"/>
</dbReference>
<dbReference type="EMBL" id="CH471066">
    <property type="protein sequence ID" value="EAW49932.1"/>
    <property type="molecule type" value="Genomic_DNA"/>
</dbReference>
<dbReference type="EMBL" id="CH471066">
    <property type="protein sequence ID" value="EAW49933.1"/>
    <property type="molecule type" value="Genomic_DNA"/>
</dbReference>
<dbReference type="EMBL" id="CH471066">
    <property type="protein sequence ID" value="EAW49934.1"/>
    <property type="molecule type" value="Genomic_DNA"/>
</dbReference>
<dbReference type="EMBL" id="BC004535">
    <property type="protein sequence ID" value="AAH04535.1"/>
    <property type="molecule type" value="mRNA"/>
</dbReference>
<dbReference type="EMBL" id="BC008074">
    <property type="protein sequence ID" value="AAH08074.1"/>
    <property type="molecule type" value="mRNA"/>
</dbReference>
<dbReference type="EMBL" id="BC011749">
    <property type="protein sequence ID" value="AAH11749.1"/>
    <property type="molecule type" value="mRNA"/>
</dbReference>
<dbReference type="EMBL" id="BC012830">
    <property type="protein sequence ID" value="AAH12830.1"/>
    <property type="molecule type" value="mRNA"/>
</dbReference>
<dbReference type="EMBL" id="BC033157">
    <property type="protein sequence ID" value="AAH33157.1"/>
    <property type="molecule type" value="mRNA"/>
</dbReference>
<dbReference type="CCDS" id="CCDS7460.1">
    <molecule id="Q969W1-1"/>
</dbReference>
<dbReference type="CCDS" id="CCDS7461.1">
    <molecule id="Q969W1-2"/>
</dbReference>
<dbReference type="CCDS" id="CCDS7462.1">
    <molecule id="Q969W1-3"/>
</dbReference>
<dbReference type="CCDS" id="CCDS7463.1">
    <molecule id="Q969W1-4"/>
</dbReference>
<dbReference type="RefSeq" id="NP_001274732.1">
    <property type="nucleotide sequence ID" value="NM_001287803.1"/>
</dbReference>
<dbReference type="RefSeq" id="NP_001274733.1">
    <property type="nucleotide sequence ID" value="NM_001287804.1"/>
</dbReference>
<dbReference type="RefSeq" id="NP_115703.2">
    <molecule id="Q969W1-1"/>
    <property type="nucleotide sequence ID" value="NM_032327.3"/>
</dbReference>
<dbReference type="RefSeq" id="NP_932160.1">
    <molecule id="Q969W1-2"/>
    <property type="nucleotide sequence ID" value="NM_198043.3"/>
</dbReference>
<dbReference type="RefSeq" id="NP_932161.1">
    <molecule id="Q969W1-3"/>
    <property type="nucleotide sequence ID" value="NM_198044.3"/>
</dbReference>
<dbReference type="RefSeq" id="NP_932162.1">
    <molecule id="Q969W1-4"/>
    <property type="nucleotide sequence ID" value="NM_198045.3"/>
</dbReference>
<dbReference type="RefSeq" id="NP_932163.1">
    <molecule id="Q969W1-1"/>
    <property type="nucleotide sequence ID" value="NM_198046.3"/>
</dbReference>
<dbReference type="RefSeq" id="XP_016872255.1">
    <molecule id="Q969W1-2"/>
    <property type="nucleotide sequence ID" value="XM_017016766.2"/>
</dbReference>
<dbReference type="RefSeq" id="XP_016872257.1">
    <molecule id="Q969W1-3"/>
    <property type="nucleotide sequence ID" value="XM_017016768.2"/>
</dbReference>
<dbReference type="RefSeq" id="XP_054222889.1">
    <molecule id="Q969W1-2"/>
    <property type="nucleotide sequence ID" value="XM_054366914.1"/>
</dbReference>
<dbReference type="RefSeq" id="XP_054222893.1">
    <molecule id="Q969W1-3"/>
    <property type="nucleotide sequence ID" value="XM_054366918.1"/>
</dbReference>
<dbReference type="SMR" id="Q969W1"/>
<dbReference type="BioGRID" id="124014">
    <property type="interactions" value="10"/>
</dbReference>
<dbReference type="FunCoup" id="Q969W1">
    <property type="interactions" value="2059"/>
</dbReference>
<dbReference type="IntAct" id="Q969W1">
    <property type="interactions" value="6"/>
</dbReference>
<dbReference type="STRING" id="9606.ENSP00000377357"/>
<dbReference type="GlyGen" id="Q969W1">
    <property type="glycosylation" value="1 site, 2 O-linked glycans (1 site)"/>
</dbReference>
<dbReference type="iPTMnet" id="Q969W1"/>
<dbReference type="PhosphoSitePlus" id="Q969W1"/>
<dbReference type="SwissPalm" id="Q969W1"/>
<dbReference type="BioMuta" id="ZDHHC16"/>
<dbReference type="DMDM" id="37999852"/>
<dbReference type="jPOST" id="Q969W1"/>
<dbReference type="MassIVE" id="Q969W1"/>
<dbReference type="PaxDb" id="9606-ENSP00000377357"/>
<dbReference type="PeptideAtlas" id="Q969W1"/>
<dbReference type="ProteomicsDB" id="75856">
    <molecule id="Q969W1-1"/>
</dbReference>
<dbReference type="ProteomicsDB" id="75857">
    <molecule id="Q969W1-2"/>
</dbReference>
<dbReference type="ProteomicsDB" id="75858">
    <molecule id="Q969W1-3"/>
</dbReference>
<dbReference type="ProteomicsDB" id="75859">
    <molecule id="Q969W1-4"/>
</dbReference>
<dbReference type="Antibodypedia" id="30898">
    <property type="antibodies" value="123 antibodies from 19 providers"/>
</dbReference>
<dbReference type="DNASU" id="84287"/>
<dbReference type="Ensembl" id="ENST00000345745.9">
    <molecule id="Q969W1-4"/>
    <property type="protein sequence ID" value="ENSP00000304487.8"/>
    <property type="gene ID" value="ENSG00000171307.19"/>
</dbReference>
<dbReference type="Ensembl" id="ENST00000352634.8">
    <molecule id="Q969W1-2"/>
    <property type="protein sequence ID" value="ENSP00000345383.4"/>
    <property type="gene ID" value="ENSG00000171307.19"/>
</dbReference>
<dbReference type="Ensembl" id="ENST00000353979.7">
    <molecule id="Q969W1-3"/>
    <property type="protein sequence ID" value="ENSP00000323360.3"/>
    <property type="gene ID" value="ENSG00000171307.19"/>
</dbReference>
<dbReference type="Ensembl" id="ENST00000370842.6">
    <molecule id="Q969W1-2"/>
    <property type="protein sequence ID" value="ENSP00000359879.1"/>
    <property type="gene ID" value="ENSG00000171307.19"/>
</dbReference>
<dbReference type="Ensembl" id="ENST00000370854.7">
    <molecule id="Q969W1-1"/>
    <property type="protein sequence ID" value="ENSP00000359891.3"/>
    <property type="gene ID" value="ENSG00000171307.19"/>
</dbReference>
<dbReference type="Ensembl" id="ENST00000393760.6">
    <molecule id="Q969W1-1"/>
    <property type="protein sequence ID" value="ENSP00000377357.1"/>
    <property type="gene ID" value="ENSG00000171307.19"/>
</dbReference>
<dbReference type="GeneID" id="84287"/>
<dbReference type="KEGG" id="hsa:84287"/>
<dbReference type="MANE-Select" id="ENST00000393760.6">
    <property type="protein sequence ID" value="ENSP00000377357.1"/>
    <property type="RefSeq nucleotide sequence ID" value="NM_198046.3"/>
    <property type="RefSeq protein sequence ID" value="NP_932163.1"/>
</dbReference>
<dbReference type="UCSC" id="uc001knj.5">
    <molecule id="Q969W1-1"/>
    <property type="organism name" value="human"/>
</dbReference>
<dbReference type="AGR" id="HGNC:20714"/>
<dbReference type="CTD" id="84287"/>
<dbReference type="DisGeNET" id="84287"/>
<dbReference type="GeneCards" id="ZDHHC16"/>
<dbReference type="HGNC" id="HGNC:20714">
    <property type="gene designation" value="ZDHHC16"/>
</dbReference>
<dbReference type="HPA" id="ENSG00000171307">
    <property type="expression patterns" value="Low tissue specificity"/>
</dbReference>
<dbReference type="MIM" id="616750">
    <property type="type" value="gene"/>
</dbReference>
<dbReference type="neXtProt" id="NX_Q969W1"/>
<dbReference type="OpenTargets" id="ENSG00000171307"/>
<dbReference type="PharmGKB" id="PA134985701"/>
<dbReference type="VEuPathDB" id="HostDB:ENSG00000171307"/>
<dbReference type="eggNOG" id="KOG1313">
    <property type="taxonomic scope" value="Eukaryota"/>
</dbReference>
<dbReference type="GeneTree" id="ENSGT00940000155032"/>
<dbReference type="HOGENOM" id="CLU_054274_0_1_1"/>
<dbReference type="InParanoid" id="Q969W1"/>
<dbReference type="OMA" id="DGIVWDC"/>
<dbReference type="OrthoDB" id="331948at2759"/>
<dbReference type="PAN-GO" id="Q969W1">
    <property type="GO annotations" value="3 GO annotations based on evolutionary models"/>
</dbReference>
<dbReference type="PhylomeDB" id="Q969W1"/>
<dbReference type="TreeFam" id="TF320809"/>
<dbReference type="BRENDA" id="2.3.1.225">
    <property type="organism ID" value="2681"/>
</dbReference>
<dbReference type="PathwayCommons" id="Q969W1"/>
<dbReference type="SignaLink" id="Q969W1"/>
<dbReference type="BioGRID-ORCS" id="84287">
    <property type="hits" value="16 hits in 1158 CRISPR screens"/>
</dbReference>
<dbReference type="ChiTaRS" id="ZDHHC16">
    <property type="organism name" value="human"/>
</dbReference>
<dbReference type="GenomeRNAi" id="84287"/>
<dbReference type="Pharos" id="Q969W1">
    <property type="development level" value="Tbio"/>
</dbReference>
<dbReference type="PRO" id="PR:Q969W1"/>
<dbReference type="Proteomes" id="UP000005640">
    <property type="component" value="Chromosome 10"/>
</dbReference>
<dbReference type="RNAct" id="Q969W1">
    <property type="molecule type" value="protein"/>
</dbReference>
<dbReference type="Bgee" id="ENSG00000171307">
    <property type="expression patterns" value="Expressed in pancreatic ductal cell and 179 other cell types or tissues"/>
</dbReference>
<dbReference type="ExpressionAtlas" id="Q969W1">
    <property type="expression patterns" value="baseline and differential"/>
</dbReference>
<dbReference type="GO" id="GO:0005789">
    <property type="term" value="C:endoplasmic reticulum membrane"/>
    <property type="evidence" value="ECO:0007669"/>
    <property type="project" value="UniProtKB-SubCell"/>
</dbReference>
<dbReference type="GO" id="GO:0005794">
    <property type="term" value="C:Golgi apparatus"/>
    <property type="evidence" value="ECO:0000318"/>
    <property type="project" value="GO_Central"/>
</dbReference>
<dbReference type="GO" id="GO:0016409">
    <property type="term" value="F:palmitoyltransferase activity"/>
    <property type="evidence" value="ECO:0000314"/>
    <property type="project" value="UniProtKB"/>
</dbReference>
<dbReference type="GO" id="GO:0019706">
    <property type="term" value="F:protein-cysteine S-palmitoyltransferase activity"/>
    <property type="evidence" value="ECO:0007669"/>
    <property type="project" value="UniProtKB-EC"/>
</dbReference>
<dbReference type="GO" id="GO:0006915">
    <property type="term" value="P:apoptotic process"/>
    <property type="evidence" value="ECO:0007669"/>
    <property type="project" value="UniProtKB-KW"/>
</dbReference>
<dbReference type="GO" id="GO:0006974">
    <property type="term" value="P:DNA damage response"/>
    <property type="evidence" value="ECO:0000250"/>
    <property type="project" value="UniProtKB"/>
</dbReference>
<dbReference type="GO" id="GO:0001654">
    <property type="term" value="P:eye development"/>
    <property type="evidence" value="ECO:0000250"/>
    <property type="project" value="UniProtKB"/>
</dbReference>
<dbReference type="GO" id="GO:0021899">
    <property type="term" value="P:fibroblast growth factor receptor signaling pathway involved in forebrain neuron fate commitment"/>
    <property type="evidence" value="ECO:0000318"/>
    <property type="project" value="GO_Central"/>
</dbReference>
<dbReference type="GO" id="GO:0007507">
    <property type="term" value="P:heart development"/>
    <property type="evidence" value="ECO:0000250"/>
    <property type="project" value="UniProtKB"/>
</dbReference>
<dbReference type="GO" id="GO:0018345">
    <property type="term" value="P:protein palmitoylation"/>
    <property type="evidence" value="ECO:0000314"/>
    <property type="project" value="UniProtKB"/>
</dbReference>
<dbReference type="GO" id="GO:0021537">
    <property type="term" value="P:telencephalon development"/>
    <property type="evidence" value="ECO:0000250"/>
    <property type="project" value="UniProtKB"/>
</dbReference>
<dbReference type="InterPro" id="IPR001594">
    <property type="entry name" value="Palmitoyltrfase_DHHC"/>
</dbReference>
<dbReference type="InterPro" id="IPR039859">
    <property type="entry name" value="PFA4/ZDH16/20/ERF2-like"/>
</dbReference>
<dbReference type="PANTHER" id="PTHR12246">
    <property type="entry name" value="PALMITOYLTRANSFERASE ZDHHC16"/>
    <property type="match status" value="1"/>
</dbReference>
<dbReference type="Pfam" id="PF01529">
    <property type="entry name" value="DHHC"/>
    <property type="match status" value="1"/>
</dbReference>
<dbReference type="PROSITE" id="PS50216">
    <property type="entry name" value="DHHC"/>
    <property type="match status" value="1"/>
</dbReference>
<sequence>MRGQRSLLLGPARLCLRLLLLLGYRRRCPPLLRGLVQRWRYGKVCLRSLLYNSFGGSDTAVDAAFEPVYWLVDNVIRWFGVVFVVLVIVLTGSIVAIAYLCVLPLILRTYSVPRLCWHFFYSHWNLILIVFHYYQAITTPPGYPPQGRNDIATVSICKKCIYPKPARTHHCSICNRCVLKMDHHCPWLNNCVGHYNHRYFFSFCFFMTLGCVYCSYGSWDLFREAYAAIEKMKQLDKNKLQAVANQTYHQTPPPTFSFRERMTHKSLVYLWFLCSSVALALGALTVWHAVLISRGETSIERHINKKERRRLQAKGRVFRNPYNYGCLDNWKVFLGVDTGRHWLTRVLLPSSHLPHGNGMSWEPPPWVTAHSASVMAV</sequence>